<feature type="chain" id="PRO_0000312314" description="Zinc transporter ZIP13">
    <location>
        <begin position="1"/>
        <end position="348"/>
    </location>
</feature>
<feature type="topological domain" description="Cytoplasmic" evidence="3">
    <location>
        <begin position="1"/>
        <end position="45"/>
    </location>
</feature>
<feature type="transmembrane region" description="Helical" evidence="3">
    <location>
        <begin position="46"/>
        <end position="66"/>
    </location>
</feature>
<feature type="topological domain" description="Lumenal" evidence="3">
    <location>
        <begin position="67"/>
        <end position="83"/>
    </location>
</feature>
<feature type="transmembrane region" description="Helical" evidence="3">
    <location>
        <begin position="84"/>
        <end position="104"/>
    </location>
</feature>
<feature type="topological domain" description="Cytoplasmic" evidence="3">
    <location>
        <begin position="105"/>
        <end position="118"/>
    </location>
</feature>
<feature type="transmembrane region" description="Helical" evidence="3">
    <location>
        <begin position="119"/>
        <end position="139"/>
    </location>
</feature>
<feature type="topological domain" description="Lumenal" evidence="3">
    <location>
        <begin position="140"/>
        <end position="219"/>
    </location>
</feature>
<feature type="transmembrane region" description="Helical" evidence="3">
    <location>
        <begin position="220"/>
        <end position="240"/>
    </location>
</feature>
<feature type="topological domain" description="Cytoplasmic" evidence="3">
    <location>
        <begin position="241"/>
        <end position="262"/>
    </location>
</feature>
<feature type="transmembrane region" description="Helical" evidence="3">
    <location>
        <begin position="263"/>
        <end position="283"/>
    </location>
</feature>
<feature type="topological domain" description="Lumenal" evidence="3">
    <location>
        <begin position="284"/>
        <end position="294"/>
    </location>
</feature>
<feature type="transmembrane region" description="Helical" evidence="3">
    <location>
        <begin position="295"/>
        <end position="315"/>
    </location>
</feature>
<feature type="topological domain" description="Cytoplasmic" evidence="3">
    <location>
        <begin position="316"/>
        <end position="326"/>
    </location>
</feature>
<feature type="transmembrane region" description="Helical" evidence="3">
    <location>
        <begin position="327"/>
        <end position="347"/>
    </location>
</feature>
<feature type="topological domain" description="Lumenal" evidence="3">
    <location>
        <position position="348"/>
    </location>
</feature>
<feature type="region of interest" description="Disordered" evidence="4">
    <location>
        <begin position="144"/>
        <end position="192"/>
    </location>
</feature>
<feature type="short sequence motif" description="XEXPHE-motif">
    <location>
        <begin position="241"/>
        <end position="246"/>
    </location>
</feature>
<feature type="compositionally biased region" description="Low complexity" evidence="4">
    <location>
        <begin position="149"/>
        <end position="169"/>
    </location>
</feature>
<feature type="compositionally biased region" description="Polar residues" evidence="4">
    <location>
        <begin position="170"/>
        <end position="182"/>
    </location>
</feature>
<evidence type="ECO:0000250" key="1">
    <source>
        <dbReference type="UniProtKB" id="Q8BZH0"/>
    </source>
</evidence>
<evidence type="ECO:0000250" key="2">
    <source>
        <dbReference type="UniProtKB" id="Q96H72"/>
    </source>
</evidence>
<evidence type="ECO:0000255" key="3"/>
<evidence type="ECO:0000256" key="4">
    <source>
        <dbReference type="SAM" id="MobiDB-lite"/>
    </source>
</evidence>
<evidence type="ECO:0000305" key="5"/>
<comment type="function">
    <text evidence="1">Functions as a zinc transporter transporting Zn(2+) from the Golgi apparatus to the cytosol and thus influences the zinc level at least in areas of the cytosol.</text>
</comment>
<comment type="catalytic activity">
    <reaction evidence="1">
        <text>Zn(2+)(in) = Zn(2+)(out)</text>
        <dbReference type="Rhea" id="RHEA:29351"/>
        <dbReference type="ChEBI" id="CHEBI:29105"/>
    </reaction>
</comment>
<comment type="subunit">
    <text evidence="2">Homodimer.</text>
</comment>
<comment type="subcellular location">
    <subcellularLocation>
        <location evidence="1">Golgi apparatus membrane</location>
        <topology evidence="2">Multi-pass membrane protein</topology>
    </subcellularLocation>
    <subcellularLocation>
        <location evidence="2">Cytoplasmic vesicle membrane</location>
    </subcellularLocation>
    <subcellularLocation>
        <location evidence="2">Endoplasmic reticulum membrane</location>
    </subcellularLocation>
</comment>
<comment type="similarity">
    <text evidence="5">Belongs to the ZIP transporter (TC 2.A.5) family.</text>
</comment>
<reference key="1">
    <citation type="journal article" date="2013" name="Nature">
        <title>The zebrafish reference genome sequence and its relationship to the human genome.</title>
        <authorList>
            <person name="Howe K."/>
            <person name="Clark M.D."/>
            <person name="Torroja C.F."/>
            <person name="Torrance J."/>
            <person name="Berthelot C."/>
            <person name="Muffato M."/>
            <person name="Collins J.E."/>
            <person name="Humphray S."/>
            <person name="McLaren K."/>
            <person name="Matthews L."/>
            <person name="McLaren S."/>
            <person name="Sealy I."/>
            <person name="Caccamo M."/>
            <person name="Churcher C."/>
            <person name="Scott C."/>
            <person name="Barrett J.C."/>
            <person name="Koch R."/>
            <person name="Rauch G.J."/>
            <person name="White S."/>
            <person name="Chow W."/>
            <person name="Kilian B."/>
            <person name="Quintais L.T."/>
            <person name="Guerra-Assuncao J.A."/>
            <person name="Zhou Y."/>
            <person name="Gu Y."/>
            <person name="Yen J."/>
            <person name="Vogel J.H."/>
            <person name="Eyre T."/>
            <person name="Redmond S."/>
            <person name="Banerjee R."/>
            <person name="Chi J."/>
            <person name="Fu B."/>
            <person name="Langley E."/>
            <person name="Maguire S.F."/>
            <person name="Laird G.K."/>
            <person name="Lloyd D."/>
            <person name="Kenyon E."/>
            <person name="Donaldson S."/>
            <person name="Sehra H."/>
            <person name="Almeida-King J."/>
            <person name="Loveland J."/>
            <person name="Trevanion S."/>
            <person name="Jones M."/>
            <person name="Quail M."/>
            <person name="Willey D."/>
            <person name="Hunt A."/>
            <person name="Burton J."/>
            <person name="Sims S."/>
            <person name="McLay K."/>
            <person name="Plumb B."/>
            <person name="Davis J."/>
            <person name="Clee C."/>
            <person name="Oliver K."/>
            <person name="Clark R."/>
            <person name="Riddle C."/>
            <person name="Elliot D."/>
            <person name="Threadgold G."/>
            <person name="Harden G."/>
            <person name="Ware D."/>
            <person name="Begum S."/>
            <person name="Mortimore B."/>
            <person name="Kerry G."/>
            <person name="Heath P."/>
            <person name="Phillimore B."/>
            <person name="Tracey A."/>
            <person name="Corby N."/>
            <person name="Dunn M."/>
            <person name="Johnson C."/>
            <person name="Wood J."/>
            <person name="Clark S."/>
            <person name="Pelan S."/>
            <person name="Griffiths G."/>
            <person name="Smith M."/>
            <person name="Glithero R."/>
            <person name="Howden P."/>
            <person name="Barker N."/>
            <person name="Lloyd C."/>
            <person name="Stevens C."/>
            <person name="Harley J."/>
            <person name="Holt K."/>
            <person name="Panagiotidis G."/>
            <person name="Lovell J."/>
            <person name="Beasley H."/>
            <person name="Henderson C."/>
            <person name="Gordon D."/>
            <person name="Auger K."/>
            <person name="Wright D."/>
            <person name="Collins J."/>
            <person name="Raisen C."/>
            <person name="Dyer L."/>
            <person name="Leung K."/>
            <person name="Robertson L."/>
            <person name="Ambridge K."/>
            <person name="Leongamornlert D."/>
            <person name="McGuire S."/>
            <person name="Gilderthorp R."/>
            <person name="Griffiths C."/>
            <person name="Manthravadi D."/>
            <person name="Nichol S."/>
            <person name="Barker G."/>
            <person name="Whitehead S."/>
            <person name="Kay M."/>
            <person name="Brown J."/>
            <person name="Murnane C."/>
            <person name="Gray E."/>
            <person name="Humphries M."/>
            <person name="Sycamore N."/>
            <person name="Barker D."/>
            <person name="Saunders D."/>
            <person name="Wallis J."/>
            <person name="Babbage A."/>
            <person name="Hammond S."/>
            <person name="Mashreghi-Mohammadi M."/>
            <person name="Barr L."/>
            <person name="Martin S."/>
            <person name="Wray P."/>
            <person name="Ellington A."/>
            <person name="Matthews N."/>
            <person name="Ellwood M."/>
            <person name="Woodmansey R."/>
            <person name="Clark G."/>
            <person name="Cooper J."/>
            <person name="Tromans A."/>
            <person name="Grafham D."/>
            <person name="Skuce C."/>
            <person name="Pandian R."/>
            <person name="Andrews R."/>
            <person name="Harrison E."/>
            <person name="Kimberley A."/>
            <person name="Garnett J."/>
            <person name="Fosker N."/>
            <person name="Hall R."/>
            <person name="Garner P."/>
            <person name="Kelly D."/>
            <person name="Bird C."/>
            <person name="Palmer S."/>
            <person name="Gehring I."/>
            <person name="Berger A."/>
            <person name="Dooley C.M."/>
            <person name="Ersan-Urun Z."/>
            <person name="Eser C."/>
            <person name="Geiger H."/>
            <person name="Geisler M."/>
            <person name="Karotki L."/>
            <person name="Kirn A."/>
            <person name="Konantz J."/>
            <person name="Konantz M."/>
            <person name="Oberlander M."/>
            <person name="Rudolph-Geiger S."/>
            <person name="Teucke M."/>
            <person name="Lanz C."/>
            <person name="Raddatz G."/>
            <person name="Osoegawa K."/>
            <person name="Zhu B."/>
            <person name="Rapp A."/>
            <person name="Widaa S."/>
            <person name="Langford C."/>
            <person name="Yang F."/>
            <person name="Schuster S.C."/>
            <person name="Carter N.P."/>
            <person name="Harrow J."/>
            <person name="Ning Z."/>
            <person name="Herrero J."/>
            <person name="Searle S.M."/>
            <person name="Enright A."/>
            <person name="Geisler R."/>
            <person name="Plasterk R.H."/>
            <person name="Lee C."/>
            <person name="Westerfield M."/>
            <person name="de Jong P.J."/>
            <person name="Zon L.I."/>
            <person name="Postlethwait J.H."/>
            <person name="Nusslein-Volhard C."/>
            <person name="Hubbard T.J."/>
            <person name="Roest Crollius H."/>
            <person name="Rogers J."/>
            <person name="Stemple D.L."/>
        </authorList>
    </citation>
    <scope>NUCLEOTIDE SEQUENCE [LARGE SCALE GENOMIC DNA]</scope>
    <source>
        <strain>Tuebingen</strain>
    </source>
</reference>
<reference key="2">
    <citation type="submission" date="2006-04" db="EMBL/GenBank/DDBJ databases">
        <authorList>
            <consortium name="NIH - Zebrafish Gene Collection (ZGC) project"/>
        </authorList>
    </citation>
    <scope>NUCLEOTIDE SEQUENCE [LARGE SCALE MRNA]</scope>
    <source>
        <tissue>Ovary</tissue>
    </source>
</reference>
<sequence>MMIQTAVAQAKTAPAGPGPWSIKDLVDLQYLDELMSIDNLDVWFCSLVGSIAIGLSGIFPLLVIPIEAGTALKTEAGCQKLKKLLSFAIGGLLGDVFLHLLPEAWAYTSSPGGSHRHYCTQGLWVIGGLMSFLTLEKMFPDEVGDPETKTSFQRTTSSSSDLSSQFSVSPQTNGICSNNNSDSKPKTDISPYTQPEKIKTSGYLNLLANCIDNFTHGLAVAGSFLVSRKVGFLTTFAILLHEIPHEVGDFAILLRAGFDRWKAARMQLSTALGGVLGACFALCSQSQHGAENATTWILPFTSGGFLYIALVNVVPDLLEETNPRNSLLQVLLLFSGIGVMALLSIAMD</sequence>
<name>S39AD_DANRE</name>
<organism>
    <name type="scientific">Danio rerio</name>
    <name type="common">Zebrafish</name>
    <name type="synonym">Brachydanio rerio</name>
    <dbReference type="NCBI Taxonomy" id="7955"/>
    <lineage>
        <taxon>Eukaryota</taxon>
        <taxon>Metazoa</taxon>
        <taxon>Chordata</taxon>
        <taxon>Craniata</taxon>
        <taxon>Vertebrata</taxon>
        <taxon>Euteleostomi</taxon>
        <taxon>Actinopterygii</taxon>
        <taxon>Neopterygii</taxon>
        <taxon>Teleostei</taxon>
        <taxon>Ostariophysi</taxon>
        <taxon>Cypriniformes</taxon>
        <taxon>Danionidae</taxon>
        <taxon>Danioninae</taxon>
        <taxon>Danio</taxon>
    </lineage>
</organism>
<protein>
    <recommendedName>
        <fullName evidence="1">Zinc transporter ZIP13</fullName>
    </recommendedName>
    <alternativeName>
        <fullName>Solute carrier family 39 member 13</fullName>
    </alternativeName>
    <alternativeName>
        <fullName>Zrt- and Irt-like protein 13</fullName>
        <shortName>ZIP-13</shortName>
    </alternativeName>
</protein>
<dbReference type="EMBL" id="AL645800">
    <property type="protein sequence ID" value="CAD58734.1"/>
    <property type="molecule type" value="Genomic_DNA"/>
</dbReference>
<dbReference type="EMBL" id="BC115134">
    <property type="protein sequence ID" value="AAI15135.1"/>
    <property type="molecule type" value="mRNA"/>
</dbReference>
<dbReference type="RefSeq" id="NP_001005306.3">
    <property type="nucleotide sequence ID" value="NM_001005306.3"/>
</dbReference>
<dbReference type="SMR" id="Q8AW42"/>
<dbReference type="FunCoup" id="Q8AW42">
    <property type="interactions" value="808"/>
</dbReference>
<dbReference type="STRING" id="7955.ENSDARP00000107224"/>
<dbReference type="PaxDb" id="7955-ENSDARP00000100998"/>
<dbReference type="GeneID" id="368686"/>
<dbReference type="KEGG" id="dre:368686"/>
<dbReference type="AGR" id="ZFIN:ZDB-GENE-030616-17"/>
<dbReference type="CTD" id="91252"/>
<dbReference type="ZFIN" id="ZDB-GENE-030616-17">
    <property type="gene designation" value="slc39a13"/>
</dbReference>
<dbReference type="eggNOG" id="KOG2694">
    <property type="taxonomic scope" value="Eukaryota"/>
</dbReference>
<dbReference type="InParanoid" id="Q8AW42"/>
<dbReference type="OrthoDB" id="200954at2759"/>
<dbReference type="PhylomeDB" id="Q8AW42"/>
<dbReference type="PRO" id="PR:Q8AW42"/>
<dbReference type="Proteomes" id="UP000000437">
    <property type="component" value="Chromosome 7"/>
</dbReference>
<dbReference type="GO" id="GO:0030659">
    <property type="term" value="C:cytoplasmic vesicle membrane"/>
    <property type="evidence" value="ECO:0000250"/>
    <property type="project" value="UniProtKB"/>
</dbReference>
<dbReference type="GO" id="GO:0005789">
    <property type="term" value="C:endoplasmic reticulum membrane"/>
    <property type="evidence" value="ECO:0007669"/>
    <property type="project" value="UniProtKB-SubCell"/>
</dbReference>
<dbReference type="GO" id="GO:0000139">
    <property type="term" value="C:Golgi membrane"/>
    <property type="evidence" value="ECO:0007669"/>
    <property type="project" value="UniProtKB-SubCell"/>
</dbReference>
<dbReference type="GO" id="GO:0005385">
    <property type="term" value="F:zinc ion transmembrane transporter activity"/>
    <property type="evidence" value="ECO:0000250"/>
    <property type="project" value="UniProtKB"/>
</dbReference>
<dbReference type="GO" id="GO:0006882">
    <property type="term" value="P:intracellular zinc ion homeostasis"/>
    <property type="evidence" value="ECO:0000318"/>
    <property type="project" value="GO_Central"/>
</dbReference>
<dbReference type="GO" id="GO:0071577">
    <property type="term" value="P:zinc ion transmembrane transport"/>
    <property type="evidence" value="ECO:0000318"/>
    <property type="project" value="GO_Central"/>
</dbReference>
<dbReference type="GO" id="GO:0006829">
    <property type="term" value="P:zinc ion transport"/>
    <property type="evidence" value="ECO:0000250"/>
    <property type="project" value="UniProtKB"/>
</dbReference>
<dbReference type="InterPro" id="IPR003689">
    <property type="entry name" value="ZIP"/>
</dbReference>
<dbReference type="PANTHER" id="PTHR16950">
    <property type="entry name" value="ZINC TRANSPORTER SLC39A7 HISTIDINE-RICH MEMBRANE PROTEIN KE4"/>
    <property type="match status" value="1"/>
</dbReference>
<dbReference type="PANTHER" id="PTHR16950:SF16">
    <property type="entry name" value="ZINC TRANSPORTER ZIP13"/>
    <property type="match status" value="1"/>
</dbReference>
<dbReference type="Pfam" id="PF02535">
    <property type="entry name" value="Zip"/>
    <property type="match status" value="1"/>
</dbReference>
<keyword id="KW-0968">Cytoplasmic vesicle</keyword>
<keyword id="KW-0256">Endoplasmic reticulum</keyword>
<keyword id="KW-0333">Golgi apparatus</keyword>
<keyword id="KW-0406">Ion transport</keyword>
<keyword id="KW-0472">Membrane</keyword>
<keyword id="KW-1185">Reference proteome</keyword>
<keyword id="KW-0812">Transmembrane</keyword>
<keyword id="KW-1133">Transmembrane helix</keyword>
<keyword id="KW-0813">Transport</keyword>
<keyword id="KW-0862">Zinc</keyword>
<keyword id="KW-0864">Zinc transport</keyword>
<accession>Q8AW42</accession>
<accession>Q1RM51</accession>
<gene>
    <name evidence="2" type="primary">slc39a13</name>
    <name type="synonym">zip13</name>
    <name type="ORF">si:by184l24.1</name>
    <name type="ORF">zgc:136440</name>
</gene>
<proteinExistence type="evidence at transcript level"/>